<sequence>MDTLDELLPREKMLRSGIASLSDVELLALFLRTGTPGKDVMTLAKEILQHFGSLYGLLSADFAQFRGVNGIGLAKFAQLKGIAELARRYYSVRMNEESALLSPEMTREFLQSQLTGEEREIFLVIFLDVQHRVLQHSRLFSGTLNHVEVHPREIVREAIKLNASAVILAHNHPSGCAEPSKADKLITERVIKCCQFMDIRVLDHLIIGRGEYVSFAERGWI</sequence>
<keyword id="KW-0378">Hydrolase</keyword>
<keyword id="KW-0479">Metal-binding</keyword>
<keyword id="KW-0482">Metalloprotease</keyword>
<keyword id="KW-0645">Protease</keyword>
<keyword id="KW-0862">Zinc</keyword>
<evidence type="ECO:0000255" key="1">
    <source>
        <dbReference type="HAMAP-Rule" id="MF_00018"/>
    </source>
</evidence>
<evidence type="ECO:0000255" key="2">
    <source>
        <dbReference type="PROSITE-ProRule" id="PRU01182"/>
    </source>
</evidence>
<dbReference type="EMBL" id="CP000026">
    <property type="protein sequence ID" value="AAV79382.1"/>
    <property type="molecule type" value="Genomic_DNA"/>
</dbReference>
<dbReference type="SMR" id="Q5PC30"/>
<dbReference type="KEGG" id="spt:SPA3581"/>
<dbReference type="HOGENOM" id="CLU_073529_0_1_6"/>
<dbReference type="Proteomes" id="UP000008185">
    <property type="component" value="Chromosome"/>
</dbReference>
<dbReference type="GO" id="GO:0046872">
    <property type="term" value="F:metal ion binding"/>
    <property type="evidence" value="ECO:0007669"/>
    <property type="project" value="UniProtKB-KW"/>
</dbReference>
<dbReference type="GO" id="GO:0008237">
    <property type="term" value="F:metallopeptidase activity"/>
    <property type="evidence" value="ECO:0007669"/>
    <property type="project" value="UniProtKB-KW"/>
</dbReference>
<dbReference type="GO" id="GO:0006508">
    <property type="term" value="P:proteolysis"/>
    <property type="evidence" value="ECO:0007669"/>
    <property type="project" value="UniProtKB-KW"/>
</dbReference>
<dbReference type="CDD" id="cd08071">
    <property type="entry name" value="MPN_DUF2466"/>
    <property type="match status" value="1"/>
</dbReference>
<dbReference type="Gene3D" id="3.40.140.10">
    <property type="entry name" value="Cytidine Deaminase, domain 2"/>
    <property type="match status" value="1"/>
</dbReference>
<dbReference type="HAMAP" id="MF_00018">
    <property type="entry name" value="UPF0758_YicR"/>
    <property type="match status" value="1"/>
</dbReference>
<dbReference type="InterPro" id="IPR037518">
    <property type="entry name" value="MPN"/>
</dbReference>
<dbReference type="InterPro" id="IPR025657">
    <property type="entry name" value="RadC_JAB"/>
</dbReference>
<dbReference type="InterPro" id="IPR010994">
    <property type="entry name" value="RuvA_2-like"/>
</dbReference>
<dbReference type="InterPro" id="IPR001405">
    <property type="entry name" value="UPF0758"/>
</dbReference>
<dbReference type="InterPro" id="IPR020891">
    <property type="entry name" value="UPF0758_CS"/>
</dbReference>
<dbReference type="InterPro" id="IPR046778">
    <property type="entry name" value="UPF0758_N"/>
</dbReference>
<dbReference type="InterPro" id="IPR022820">
    <property type="entry name" value="UPF0758_YicR"/>
</dbReference>
<dbReference type="NCBIfam" id="NF000642">
    <property type="entry name" value="PRK00024.1"/>
    <property type="match status" value="1"/>
</dbReference>
<dbReference type="NCBIfam" id="TIGR00608">
    <property type="entry name" value="radc"/>
    <property type="match status" value="1"/>
</dbReference>
<dbReference type="PANTHER" id="PTHR30471">
    <property type="entry name" value="DNA REPAIR PROTEIN RADC"/>
    <property type="match status" value="1"/>
</dbReference>
<dbReference type="PANTHER" id="PTHR30471:SF3">
    <property type="entry name" value="UPF0758 PROTEIN YEES-RELATED"/>
    <property type="match status" value="1"/>
</dbReference>
<dbReference type="Pfam" id="PF04002">
    <property type="entry name" value="RadC"/>
    <property type="match status" value="1"/>
</dbReference>
<dbReference type="Pfam" id="PF20582">
    <property type="entry name" value="UPF0758_N"/>
    <property type="match status" value="1"/>
</dbReference>
<dbReference type="SUPFAM" id="SSF47781">
    <property type="entry name" value="RuvA domain 2-like"/>
    <property type="match status" value="1"/>
</dbReference>
<dbReference type="PROSITE" id="PS50249">
    <property type="entry name" value="MPN"/>
    <property type="match status" value="1"/>
</dbReference>
<dbReference type="PROSITE" id="PS01302">
    <property type="entry name" value="UPF0758"/>
    <property type="match status" value="1"/>
</dbReference>
<feature type="chain" id="PRO_0000190724" description="UPF0758 protein YicR">
    <location>
        <begin position="1"/>
        <end position="221"/>
    </location>
</feature>
<feature type="domain" description="MPN" evidence="2">
    <location>
        <begin position="99"/>
        <end position="221"/>
    </location>
</feature>
<feature type="short sequence motif" description="JAMM motif" evidence="2">
    <location>
        <begin position="170"/>
        <end position="183"/>
    </location>
</feature>
<feature type="binding site" evidence="2">
    <location>
        <position position="170"/>
    </location>
    <ligand>
        <name>Zn(2+)</name>
        <dbReference type="ChEBI" id="CHEBI:29105"/>
        <note>catalytic</note>
    </ligand>
</feature>
<feature type="binding site" evidence="2">
    <location>
        <position position="172"/>
    </location>
    <ligand>
        <name>Zn(2+)</name>
        <dbReference type="ChEBI" id="CHEBI:29105"/>
        <note>catalytic</note>
    </ligand>
</feature>
<feature type="binding site" evidence="2">
    <location>
        <position position="183"/>
    </location>
    <ligand>
        <name>Zn(2+)</name>
        <dbReference type="ChEBI" id="CHEBI:29105"/>
        <note>catalytic</note>
    </ligand>
</feature>
<organism>
    <name type="scientific">Salmonella paratyphi A (strain ATCC 9150 / SARB42)</name>
    <dbReference type="NCBI Taxonomy" id="295319"/>
    <lineage>
        <taxon>Bacteria</taxon>
        <taxon>Pseudomonadati</taxon>
        <taxon>Pseudomonadota</taxon>
        <taxon>Gammaproteobacteria</taxon>
        <taxon>Enterobacterales</taxon>
        <taxon>Enterobacteriaceae</taxon>
        <taxon>Salmonella</taxon>
    </lineage>
</organism>
<accession>Q5PC30</accession>
<proteinExistence type="inferred from homology"/>
<reference key="1">
    <citation type="journal article" date="2004" name="Nat. Genet.">
        <title>Comparison of genome degradation in Paratyphi A and Typhi, human-restricted serovars of Salmonella enterica that cause typhoid.</title>
        <authorList>
            <person name="McClelland M."/>
            <person name="Sanderson K.E."/>
            <person name="Clifton S.W."/>
            <person name="Latreille P."/>
            <person name="Porwollik S."/>
            <person name="Sabo A."/>
            <person name="Meyer R."/>
            <person name="Bieri T."/>
            <person name="Ozersky P."/>
            <person name="McLellan M."/>
            <person name="Harkins C.R."/>
            <person name="Wang C."/>
            <person name="Nguyen C."/>
            <person name="Berghoff A."/>
            <person name="Elliott G."/>
            <person name="Kohlberg S."/>
            <person name="Strong C."/>
            <person name="Du F."/>
            <person name="Carter J."/>
            <person name="Kremizki C."/>
            <person name="Layman D."/>
            <person name="Leonard S."/>
            <person name="Sun H."/>
            <person name="Fulton L."/>
            <person name="Nash W."/>
            <person name="Miner T."/>
            <person name="Minx P."/>
            <person name="Delehaunty K."/>
            <person name="Fronick C."/>
            <person name="Magrini V."/>
            <person name="Nhan M."/>
            <person name="Warren W."/>
            <person name="Florea L."/>
            <person name="Spieth J."/>
            <person name="Wilson R.K."/>
        </authorList>
    </citation>
    <scope>NUCLEOTIDE SEQUENCE [LARGE SCALE GENOMIC DNA]</scope>
    <source>
        <strain>ATCC 9150 / SARB42</strain>
    </source>
</reference>
<name>YICR_SALPA</name>
<comment type="similarity">
    <text evidence="1">Belongs to the UPF0758 family. YicR subfamily.</text>
</comment>
<gene>
    <name evidence="1" type="primary">yicR</name>
    <name type="ordered locus">SPA3581</name>
</gene>
<protein>
    <recommendedName>
        <fullName evidence="1">UPF0758 protein YicR</fullName>
    </recommendedName>
</protein>